<name>Y1774_OLEA2</name>
<feature type="chain" id="PRO_0000258961" description="Nucleotide-binding protein Dde_1774">
    <location>
        <begin position="1"/>
        <end position="294"/>
    </location>
</feature>
<feature type="binding site" evidence="1">
    <location>
        <begin position="14"/>
        <end position="21"/>
    </location>
    <ligand>
        <name>ATP</name>
        <dbReference type="ChEBI" id="CHEBI:30616"/>
    </ligand>
</feature>
<feature type="binding site" evidence="1">
    <location>
        <begin position="66"/>
        <end position="69"/>
    </location>
    <ligand>
        <name>GTP</name>
        <dbReference type="ChEBI" id="CHEBI:37565"/>
    </ligand>
</feature>
<sequence length="294" mass="33065">MKKSESLPVLIVTGLSGAGKSTVLNVFEDLRFFTIDGLPVGVVADLLEHLARDAMGRYRGVVLGMDLRQFDFLDEFEGALMRLEKMGVSPRIIYLEADSDTLVRRFATTRRPHPLEGGDLGLEAAVEHERNLLAPVRERADLILDTSEFSIHDLRRIVQKKWSSLGGSLRSLRVNLITFGFKYGVPSDADMVFDLRFLPNPYFDAKLKALSGKDPEIQQFVLGCEQGKTFFKRFLDFLLFLLPQYEAEGRYRITLAIGCTGGRHRSVSTAEALRDALKKSDYAVSLEHRHIDLG</sequence>
<accession>Q310S5</accession>
<keyword id="KW-0067">ATP-binding</keyword>
<keyword id="KW-0342">GTP-binding</keyword>
<keyword id="KW-0547">Nucleotide-binding</keyword>
<keyword id="KW-1185">Reference proteome</keyword>
<reference key="1">
    <citation type="journal article" date="2011" name="J. Bacteriol.">
        <title>Complete genome sequence and updated annotation of Desulfovibrio alaskensis G20.</title>
        <authorList>
            <person name="Hauser L.J."/>
            <person name="Land M.L."/>
            <person name="Brown S.D."/>
            <person name="Larimer F."/>
            <person name="Keller K.L."/>
            <person name="Rapp-Giles B.J."/>
            <person name="Price M.N."/>
            <person name="Lin M."/>
            <person name="Bruce D.C."/>
            <person name="Detter J.C."/>
            <person name="Tapia R."/>
            <person name="Han C.S."/>
            <person name="Goodwin L.A."/>
            <person name="Cheng J.F."/>
            <person name="Pitluck S."/>
            <person name="Copeland A."/>
            <person name="Lucas S."/>
            <person name="Nolan M."/>
            <person name="Lapidus A.L."/>
            <person name="Palumbo A.V."/>
            <person name="Wall J.D."/>
        </authorList>
    </citation>
    <scope>NUCLEOTIDE SEQUENCE [LARGE SCALE GENOMIC DNA]</scope>
    <source>
        <strain>ATCC BAA-1058 / DSM 17464 / G20</strain>
    </source>
</reference>
<comment type="function">
    <text evidence="1">Displays ATPase and GTPase activities.</text>
</comment>
<comment type="similarity">
    <text evidence="1">Belongs to the RapZ-like family.</text>
</comment>
<organism>
    <name type="scientific">Oleidesulfovibrio alaskensis (strain ATCC BAA-1058 / DSM 17464 / G20)</name>
    <name type="common">Desulfovibrio alaskensis</name>
    <dbReference type="NCBI Taxonomy" id="207559"/>
    <lineage>
        <taxon>Bacteria</taxon>
        <taxon>Pseudomonadati</taxon>
        <taxon>Thermodesulfobacteriota</taxon>
        <taxon>Desulfovibrionia</taxon>
        <taxon>Desulfovibrionales</taxon>
        <taxon>Desulfovibrionaceae</taxon>
        <taxon>Oleidesulfovibrio</taxon>
    </lineage>
</organism>
<proteinExistence type="inferred from homology"/>
<gene>
    <name type="ordered locus">Dde_1774</name>
</gene>
<dbReference type="EMBL" id="CP000112">
    <property type="protein sequence ID" value="ABB38571.1"/>
    <property type="molecule type" value="Genomic_DNA"/>
</dbReference>
<dbReference type="RefSeq" id="WP_011367701.1">
    <property type="nucleotide sequence ID" value="NC_007519.1"/>
</dbReference>
<dbReference type="SMR" id="Q310S5"/>
<dbReference type="STRING" id="207559.Dde_1774"/>
<dbReference type="KEGG" id="dde:Dde_1774"/>
<dbReference type="eggNOG" id="COG1660">
    <property type="taxonomic scope" value="Bacteria"/>
</dbReference>
<dbReference type="HOGENOM" id="CLU_059558_0_0_7"/>
<dbReference type="Proteomes" id="UP000002710">
    <property type="component" value="Chromosome"/>
</dbReference>
<dbReference type="GO" id="GO:0005524">
    <property type="term" value="F:ATP binding"/>
    <property type="evidence" value="ECO:0007669"/>
    <property type="project" value="UniProtKB-UniRule"/>
</dbReference>
<dbReference type="GO" id="GO:0005525">
    <property type="term" value="F:GTP binding"/>
    <property type="evidence" value="ECO:0007669"/>
    <property type="project" value="UniProtKB-UniRule"/>
</dbReference>
<dbReference type="Gene3D" id="3.40.50.300">
    <property type="entry name" value="P-loop containing nucleotide triphosphate hydrolases"/>
    <property type="match status" value="1"/>
</dbReference>
<dbReference type="HAMAP" id="MF_00636">
    <property type="entry name" value="RapZ_like"/>
    <property type="match status" value="1"/>
</dbReference>
<dbReference type="InterPro" id="IPR027417">
    <property type="entry name" value="P-loop_NTPase"/>
</dbReference>
<dbReference type="InterPro" id="IPR005337">
    <property type="entry name" value="RapZ-like"/>
</dbReference>
<dbReference type="InterPro" id="IPR053930">
    <property type="entry name" value="RapZ-like_N"/>
</dbReference>
<dbReference type="InterPro" id="IPR053931">
    <property type="entry name" value="RapZ_C"/>
</dbReference>
<dbReference type="NCBIfam" id="NF003828">
    <property type="entry name" value="PRK05416.1"/>
    <property type="match status" value="1"/>
</dbReference>
<dbReference type="PANTHER" id="PTHR30448">
    <property type="entry name" value="RNASE ADAPTER PROTEIN RAPZ"/>
    <property type="match status" value="1"/>
</dbReference>
<dbReference type="PANTHER" id="PTHR30448:SF0">
    <property type="entry name" value="RNASE ADAPTER PROTEIN RAPZ"/>
    <property type="match status" value="1"/>
</dbReference>
<dbReference type="Pfam" id="PF22740">
    <property type="entry name" value="PapZ_C"/>
    <property type="match status" value="1"/>
</dbReference>
<dbReference type="Pfam" id="PF03668">
    <property type="entry name" value="RapZ-like_N"/>
    <property type="match status" value="1"/>
</dbReference>
<dbReference type="PIRSF" id="PIRSF005052">
    <property type="entry name" value="P-loopkin"/>
    <property type="match status" value="1"/>
</dbReference>
<dbReference type="SUPFAM" id="SSF52540">
    <property type="entry name" value="P-loop containing nucleoside triphosphate hydrolases"/>
    <property type="match status" value="1"/>
</dbReference>
<protein>
    <recommendedName>
        <fullName evidence="1">Nucleotide-binding protein Dde_1774</fullName>
    </recommendedName>
</protein>
<evidence type="ECO:0000255" key="1">
    <source>
        <dbReference type="HAMAP-Rule" id="MF_00636"/>
    </source>
</evidence>